<comment type="function">
    <text evidence="5 10 12 13 14">Transcriptional regulator that plays a role in various cellular processes including embryonic development, cell differentiation, angiogenesis and tissue homeostasis (PubMed:12064918, PubMed:16516194). Upon BMP ligand binding to their receptors at the cell surface, is phosphorylated by activated type I BMP receptors (BMPRIs) and associates with SMAD4 to form a heteromeric complex which translocates into the nucleus acting as transcription factor (PubMed:9442019). In turn, the hetero-trimeric complex recognizes cis-regulatory elements containing Smad Binding Elements (SBEs) to modulate the outcome of the signaling network (PubMed:33510867). Non-phosphorylated SMAD5 has a cytoplasmic role in energy metabolism regulation by promoting mitochondrial respiration and glycolysis in response to cytoplasmic pH changes (PubMed:28675158). Mechanistically, interacts with hexokinase 1/HK1 and thereby accelerates glycolysis (PubMed:28675158).</text>
</comment>
<comment type="subunit">
    <text evidence="1 6 8 9 10 11 12 13">Homodimer (PubMed:33510867). Forms trimers with the co-SMAD SMAD4 (PubMed:9442019). Interacts with PEBP2-alpha subunit and SMURF1. Interacts with SUV39H1 and SUV39H2. Interacts (via MH2 domain) with LEMD3. Interacts with WWP1. Interacts with TMEM119 (By similarity). Interacts with ZNF8 (PubMed:12370310). Interacts with RANBP3L (PubMed:25755279). Interacts with HK1 (PubMed:28675158). Interacts with HGS; this interaction attenuates BMP signaling (PubMed:16516194).</text>
</comment>
<comment type="interaction">
    <interactant intactId="EBI-6391136">
        <id>Q99717</id>
    </interactant>
    <interactant intactId="EBI-351962">
        <id>P17844</id>
        <label>DDX5</label>
    </interactant>
    <organismsDiffer>false</organismsDiffer>
    <experiments>3</experiments>
</comment>
<comment type="interaction">
    <interactant intactId="EBI-6391136">
        <id>Q99717</id>
    </interactant>
    <interactant intactId="EBI-2432309">
        <id>Q92876</id>
        <label>KLK6</label>
    </interactant>
    <organismsDiffer>false</organismsDiffer>
    <experiments>3</experiments>
</comment>
<comment type="interaction">
    <interactant intactId="EBI-6391136">
        <id>Q99717</id>
    </interactant>
    <interactant intactId="EBI-725647">
        <id>Q99732</id>
        <label>LITAF</label>
    </interactant>
    <organismsDiffer>false</organismsDiffer>
    <experiments>3</experiments>
</comment>
<comment type="interaction">
    <interactant intactId="EBI-6391136">
        <id>Q99717</id>
    </interactant>
    <interactant intactId="EBI-12029004">
        <id>P78424</id>
        <label>POU6F2</label>
    </interactant>
    <organismsDiffer>false</organismsDiffer>
    <experiments>3</experiments>
</comment>
<comment type="interaction">
    <interactant intactId="EBI-6391136">
        <id>Q99717</id>
    </interactant>
    <interactant intactId="EBI-396727">
        <id>Q9HAU4</id>
        <label>SMURF2</label>
    </interactant>
    <organismsDiffer>false</organismsDiffer>
    <experiments>3</experiments>
</comment>
<comment type="interaction">
    <interactant intactId="EBI-6391136">
        <id>Q99717</id>
    </interactant>
    <interactant intactId="EBI-727055">
        <id>Q969T9</id>
        <label>WBP2</label>
    </interactant>
    <organismsDiffer>false</organismsDiffer>
    <experiments>3</experiments>
</comment>
<comment type="subcellular location">
    <subcellularLocation>
        <location evidence="10 12 14">Cytoplasm</location>
    </subcellularLocation>
    <subcellularLocation>
        <location evidence="12 14">Nucleus</location>
    </subcellularLocation>
    <subcellularLocation>
        <location evidence="7">Mitochondrion</location>
    </subcellularLocation>
    <text evidence="14">Cytoplasmic in the absence of ligand. Migrates to the nucleus when complexed with SMAD4.</text>
</comment>
<comment type="tissue specificity">
    <text>Ubiquitous.</text>
</comment>
<comment type="PTM">
    <text evidence="5">Phosphorylated on serine by BMP (bone morphogenetic proteins) type 1 receptor kinase.</text>
</comment>
<comment type="PTM">
    <text>Ubiquitin-mediated proteolysis by SMAD-specific E3 ubiquitin ligase SMURF1.</text>
</comment>
<comment type="similarity">
    <text evidence="16">Belongs to the dwarfin/SMAD family.</text>
</comment>
<dbReference type="EMBL" id="U59913">
    <property type="protein sequence ID" value="AAC50791.1"/>
    <property type="molecule type" value="mRNA"/>
</dbReference>
<dbReference type="EMBL" id="AF010601">
    <property type="protein sequence ID" value="AAB66353.1"/>
    <property type="molecule type" value="mRNA"/>
</dbReference>
<dbReference type="EMBL" id="AF010607">
    <property type="protein sequence ID" value="AAB92396.1"/>
    <property type="molecule type" value="Genomic_DNA"/>
</dbReference>
<dbReference type="EMBL" id="AF010602">
    <property type="protein sequence ID" value="AAB92396.1"/>
    <property type="status" value="JOINED"/>
    <property type="molecule type" value="Genomic_DNA"/>
</dbReference>
<dbReference type="EMBL" id="AF010603">
    <property type="protein sequence ID" value="AAB92396.1"/>
    <property type="status" value="JOINED"/>
    <property type="molecule type" value="Genomic_DNA"/>
</dbReference>
<dbReference type="EMBL" id="AF010604">
    <property type="protein sequence ID" value="AAB92396.1"/>
    <property type="status" value="JOINED"/>
    <property type="molecule type" value="Genomic_DNA"/>
</dbReference>
<dbReference type="EMBL" id="AF010605">
    <property type="protein sequence ID" value="AAB92396.1"/>
    <property type="status" value="JOINED"/>
    <property type="molecule type" value="Genomic_DNA"/>
</dbReference>
<dbReference type="EMBL" id="AF010606">
    <property type="protein sequence ID" value="AAB92396.1"/>
    <property type="status" value="JOINED"/>
    <property type="molecule type" value="Genomic_DNA"/>
</dbReference>
<dbReference type="EMBL" id="U73825">
    <property type="protein sequence ID" value="AAB95090.1"/>
    <property type="molecule type" value="mRNA"/>
</dbReference>
<dbReference type="EMBL" id="AF009744">
    <property type="protein sequence ID" value="AAB82655.1"/>
    <property type="molecule type" value="Genomic_DNA"/>
</dbReference>
<dbReference type="EMBL" id="AF009739">
    <property type="protein sequence ID" value="AAB82655.1"/>
    <property type="status" value="JOINED"/>
    <property type="molecule type" value="Genomic_DNA"/>
</dbReference>
<dbReference type="EMBL" id="AF009740">
    <property type="protein sequence ID" value="AAB82655.1"/>
    <property type="status" value="JOINED"/>
    <property type="molecule type" value="Genomic_DNA"/>
</dbReference>
<dbReference type="EMBL" id="AF009741">
    <property type="protein sequence ID" value="AAB82655.1"/>
    <property type="status" value="JOINED"/>
    <property type="molecule type" value="Genomic_DNA"/>
</dbReference>
<dbReference type="EMBL" id="AF009742">
    <property type="protein sequence ID" value="AAB82655.1"/>
    <property type="status" value="JOINED"/>
    <property type="molecule type" value="Genomic_DNA"/>
</dbReference>
<dbReference type="EMBL" id="AF009743">
    <property type="protein sequence ID" value="AAB82655.1"/>
    <property type="status" value="JOINED"/>
    <property type="molecule type" value="Genomic_DNA"/>
</dbReference>
<dbReference type="EMBL" id="AF009678">
    <property type="protein sequence ID" value="AAB72180.1"/>
    <property type="molecule type" value="mRNA"/>
</dbReference>
<dbReference type="EMBL" id="BC009682">
    <property type="protein sequence ID" value="AAH09682.1"/>
    <property type="molecule type" value="mRNA"/>
</dbReference>
<dbReference type="CCDS" id="CCDS75308.1"/>
<dbReference type="RefSeq" id="NP_001001419.1">
    <property type="nucleotide sequence ID" value="NM_001001419.3"/>
</dbReference>
<dbReference type="RefSeq" id="NP_001001420.1">
    <property type="nucleotide sequence ID" value="NM_001001420.3"/>
</dbReference>
<dbReference type="RefSeq" id="NP_005894.3">
    <property type="nucleotide sequence ID" value="NM_005903.6"/>
</dbReference>
<dbReference type="RefSeq" id="XP_016864959.1">
    <property type="nucleotide sequence ID" value="XM_017009470.3"/>
</dbReference>
<dbReference type="RefSeq" id="XP_024301814.1">
    <property type="nucleotide sequence ID" value="XM_024446046.2"/>
</dbReference>
<dbReference type="RefSeq" id="XP_024301815.1">
    <property type="nucleotide sequence ID" value="XM_024446047.2"/>
</dbReference>
<dbReference type="RefSeq" id="XP_054208560.1">
    <property type="nucleotide sequence ID" value="XM_054352585.1"/>
</dbReference>
<dbReference type="RefSeq" id="XP_054208561.1">
    <property type="nucleotide sequence ID" value="XM_054352586.1"/>
</dbReference>
<dbReference type="RefSeq" id="XP_054208562.1">
    <property type="nucleotide sequence ID" value="XM_054352587.1"/>
</dbReference>
<dbReference type="PDB" id="6FZS">
    <property type="method" value="X-ray"/>
    <property type="resolution" value="2.31 A"/>
    <property type="chains" value="A/B=9-138"/>
</dbReference>
<dbReference type="PDB" id="6TCE">
    <property type="method" value="X-ray"/>
    <property type="resolution" value="2.92 A"/>
    <property type="chains" value="A=9-138"/>
</dbReference>
<dbReference type="PDBsum" id="6FZS"/>
<dbReference type="PDBsum" id="6TCE"/>
<dbReference type="SASBDB" id="Q99717"/>
<dbReference type="SMR" id="Q99717"/>
<dbReference type="BioGRID" id="110265">
    <property type="interactions" value="88"/>
</dbReference>
<dbReference type="DIP" id="DIP-57571N"/>
<dbReference type="FunCoup" id="Q99717">
    <property type="interactions" value="3706"/>
</dbReference>
<dbReference type="IntAct" id="Q99717">
    <property type="interactions" value="53"/>
</dbReference>
<dbReference type="MINT" id="Q99717"/>
<dbReference type="STRING" id="9606.ENSP00000441954"/>
<dbReference type="GlyGen" id="Q99717">
    <property type="glycosylation" value="2 sites, 1 O-linked glycan (2 sites)"/>
</dbReference>
<dbReference type="iPTMnet" id="Q99717"/>
<dbReference type="PhosphoSitePlus" id="Q99717"/>
<dbReference type="BioMuta" id="SMAD5"/>
<dbReference type="DMDM" id="13959566"/>
<dbReference type="jPOST" id="Q99717"/>
<dbReference type="MassIVE" id="Q99717"/>
<dbReference type="PaxDb" id="9606-ENSP00000441954"/>
<dbReference type="PeptideAtlas" id="Q99717"/>
<dbReference type="ProteomicsDB" id="78432"/>
<dbReference type="Pumba" id="Q99717"/>
<dbReference type="Antibodypedia" id="7303">
    <property type="antibodies" value="608 antibodies from 41 providers"/>
</dbReference>
<dbReference type="DNASU" id="4090"/>
<dbReference type="Ensembl" id="ENST00000509297.6">
    <property type="protein sequence ID" value="ENSP00000426696.2"/>
    <property type="gene ID" value="ENSG00000113658.18"/>
</dbReference>
<dbReference type="Ensembl" id="ENST00000545279.6">
    <property type="protein sequence ID" value="ENSP00000441954.2"/>
    <property type="gene ID" value="ENSG00000113658.18"/>
</dbReference>
<dbReference type="Ensembl" id="ENST00000545620.5">
    <property type="protein sequence ID" value="ENSP00000446474.2"/>
    <property type="gene ID" value="ENSG00000113658.18"/>
</dbReference>
<dbReference type="GeneID" id="4090"/>
<dbReference type="KEGG" id="hsa:4090"/>
<dbReference type="MANE-Select" id="ENST00000545279.6">
    <property type="protein sequence ID" value="ENSP00000441954.2"/>
    <property type="RefSeq nucleotide sequence ID" value="NM_005903.7"/>
    <property type="RefSeq protein sequence ID" value="NP_005894.3"/>
</dbReference>
<dbReference type="UCSC" id="uc032vlw.2">
    <property type="organism name" value="human"/>
</dbReference>
<dbReference type="AGR" id="HGNC:6771"/>
<dbReference type="CTD" id="4090"/>
<dbReference type="DisGeNET" id="4090"/>
<dbReference type="GeneCards" id="SMAD5"/>
<dbReference type="HGNC" id="HGNC:6771">
    <property type="gene designation" value="SMAD5"/>
</dbReference>
<dbReference type="HPA" id="ENSG00000113658">
    <property type="expression patterns" value="Low tissue specificity"/>
</dbReference>
<dbReference type="MIM" id="603110">
    <property type="type" value="gene"/>
</dbReference>
<dbReference type="neXtProt" id="NX_Q99717"/>
<dbReference type="OpenTargets" id="ENSG00000113658"/>
<dbReference type="PharmGKB" id="PA30528"/>
<dbReference type="VEuPathDB" id="HostDB:ENSG00000113658"/>
<dbReference type="eggNOG" id="KOG3701">
    <property type="taxonomic scope" value="Eukaryota"/>
</dbReference>
<dbReference type="GeneTree" id="ENSGT00940000155437"/>
<dbReference type="HOGENOM" id="CLU_026736_0_2_1"/>
<dbReference type="InParanoid" id="Q99717"/>
<dbReference type="OMA" id="QPMDTGN"/>
<dbReference type="OrthoDB" id="5794312at2759"/>
<dbReference type="PAN-GO" id="Q99717">
    <property type="GO annotations" value="10 GO annotations based on evolutionary models"/>
</dbReference>
<dbReference type="PhylomeDB" id="Q99717"/>
<dbReference type="PathwayCommons" id="Q99717"/>
<dbReference type="Reactome" id="R-HSA-201451">
    <property type="pathway name" value="Signaling by BMP"/>
</dbReference>
<dbReference type="SignaLink" id="Q99717"/>
<dbReference type="SIGNOR" id="Q99717"/>
<dbReference type="BioGRID-ORCS" id="4090">
    <property type="hits" value="12 hits in 348 CRISPR screens"/>
</dbReference>
<dbReference type="ChiTaRS" id="SMAD5">
    <property type="organism name" value="human"/>
</dbReference>
<dbReference type="GeneWiki" id="Mothers_against_decapentaplegic_homolog_5"/>
<dbReference type="GenomeRNAi" id="4090"/>
<dbReference type="Pharos" id="Q99717">
    <property type="development level" value="Tbio"/>
</dbReference>
<dbReference type="PRO" id="PR:Q99717"/>
<dbReference type="Proteomes" id="UP000005640">
    <property type="component" value="Chromosome 5"/>
</dbReference>
<dbReference type="RNAct" id="Q99717">
    <property type="molecule type" value="protein"/>
</dbReference>
<dbReference type="Bgee" id="ENSG00000113658">
    <property type="expression patterns" value="Expressed in mucosa of paranasal sinus and 201 other cell types or tissues"/>
</dbReference>
<dbReference type="ExpressionAtlas" id="Q99717">
    <property type="expression patterns" value="baseline and differential"/>
</dbReference>
<dbReference type="GO" id="GO:0000785">
    <property type="term" value="C:chromatin"/>
    <property type="evidence" value="ECO:0000247"/>
    <property type="project" value="NTNU_SB"/>
</dbReference>
<dbReference type="GO" id="GO:0005737">
    <property type="term" value="C:cytoplasm"/>
    <property type="evidence" value="ECO:0000250"/>
    <property type="project" value="BHF-UCL"/>
</dbReference>
<dbReference type="GO" id="GO:0005829">
    <property type="term" value="C:cytosol"/>
    <property type="evidence" value="ECO:0000314"/>
    <property type="project" value="HPA"/>
</dbReference>
<dbReference type="GO" id="GO:0071144">
    <property type="term" value="C:heteromeric SMAD protein complex"/>
    <property type="evidence" value="ECO:0000318"/>
    <property type="project" value="GO_Central"/>
</dbReference>
<dbReference type="GO" id="GO:0001673">
    <property type="term" value="C:male germ cell nucleus"/>
    <property type="evidence" value="ECO:0000303"/>
    <property type="project" value="UniProt"/>
</dbReference>
<dbReference type="GO" id="GO:0005739">
    <property type="term" value="C:mitochondrion"/>
    <property type="evidence" value="ECO:0007669"/>
    <property type="project" value="UniProtKB-SubCell"/>
</dbReference>
<dbReference type="GO" id="GO:0005654">
    <property type="term" value="C:nucleoplasm"/>
    <property type="evidence" value="ECO:0000314"/>
    <property type="project" value="HPA"/>
</dbReference>
<dbReference type="GO" id="GO:0005634">
    <property type="term" value="C:nucleus"/>
    <property type="evidence" value="ECO:0000250"/>
    <property type="project" value="BHF-UCL"/>
</dbReference>
<dbReference type="GO" id="GO:0032991">
    <property type="term" value="C:protein-containing complex"/>
    <property type="evidence" value="ECO:0000314"/>
    <property type="project" value="MGI"/>
</dbReference>
<dbReference type="GO" id="GO:0071141">
    <property type="term" value="C:SMAD protein complex"/>
    <property type="evidence" value="ECO:0000303"/>
    <property type="project" value="BHF-UCL"/>
</dbReference>
<dbReference type="GO" id="GO:0017151">
    <property type="term" value="F:DEAD/H-box RNA helicase binding"/>
    <property type="evidence" value="ECO:0000353"/>
    <property type="project" value="BHF-UCL"/>
</dbReference>
<dbReference type="GO" id="GO:0003700">
    <property type="term" value="F:DNA-binding transcription factor activity"/>
    <property type="evidence" value="ECO:0000305"/>
    <property type="project" value="UniProt"/>
</dbReference>
<dbReference type="GO" id="GO:0000981">
    <property type="term" value="F:DNA-binding transcription factor activity, RNA polymerase II-specific"/>
    <property type="evidence" value="ECO:0000247"/>
    <property type="project" value="NTNU_SB"/>
</dbReference>
<dbReference type="GO" id="GO:0001227">
    <property type="term" value="F:DNA-binding transcription repressor activity, RNA polymerase II-specific"/>
    <property type="evidence" value="ECO:0007669"/>
    <property type="project" value="Ensembl"/>
</dbReference>
<dbReference type="GO" id="GO:0070411">
    <property type="term" value="F:I-SMAD binding"/>
    <property type="evidence" value="ECO:0000318"/>
    <property type="project" value="GO_Central"/>
</dbReference>
<dbReference type="GO" id="GO:0046872">
    <property type="term" value="F:metal ion binding"/>
    <property type="evidence" value="ECO:0007669"/>
    <property type="project" value="UniProtKB-KW"/>
</dbReference>
<dbReference type="GO" id="GO:0000978">
    <property type="term" value="F:RNA polymerase II cis-regulatory region sequence-specific DNA binding"/>
    <property type="evidence" value="ECO:0000314"/>
    <property type="project" value="BHF-UCL"/>
</dbReference>
<dbReference type="GO" id="GO:1990837">
    <property type="term" value="F:sequence-specific double-stranded DNA binding"/>
    <property type="evidence" value="ECO:0000314"/>
    <property type="project" value="ARUK-UCL"/>
</dbReference>
<dbReference type="GO" id="GO:0031625">
    <property type="term" value="F:ubiquitin protein ligase binding"/>
    <property type="evidence" value="ECO:0000353"/>
    <property type="project" value="BHF-UCL"/>
</dbReference>
<dbReference type="GO" id="GO:0009653">
    <property type="term" value="P:anatomical structure morphogenesis"/>
    <property type="evidence" value="ECO:0000318"/>
    <property type="project" value="GO_Central"/>
</dbReference>
<dbReference type="GO" id="GO:0030509">
    <property type="term" value="P:BMP signaling pathway"/>
    <property type="evidence" value="ECO:0000314"/>
    <property type="project" value="UniProt"/>
</dbReference>
<dbReference type="GO" id="GO:0060348">
    <property type="term" value="P:bone development"/>
    <property type="evidence" value="ECO:0007669"/>
    <property type="project" value="Ensembl"/>
</dbReference>
<dbReference type="GO" id="GO:0003161">
    <property type="term" value="P:cardiac conduction system development"/>
    <property type="evidence" value="ECO:0000303"/>
    <property type="project" value="BHF-UCL"/>
</dbReference>
<dbReference type="GO" id="GO:0060048">
    <property type="term" value="P:cardiac muscle contraction"/>
    <property type="evidence" value="ECO:0007669"/>
    <property type="project" value="Ensembl"/>
</dbReference>
<dbReference type="GO" id="GO:0051216">
    <property type="term" value="P:cartilage development"/>
    <property type="evidence" value="ECO:0007669"/>
    <property type="project" value="Ensembl"/>
</dbReference>
<dbReference type="GO" id="GO:0030154">
    <property type="term" value="P:cell differentiation"/>
    <property type="evidence" value="ECO:0000314"/>
    <property type="project" value="UniProt"/>
</dbReference>
<dbReference type="GO" id="GO:0009880">
    <property type="term" value="P:embryonic pattern specification"/>
    <property type="evidence" value="ECO:0000250"/>
    <property type="project" value="UniProtKB"/>
</dbReference>
<dbReference type="GO" id="GO:0030218">
    <property type="term" value="P:erythrocyte differentiation"/>
    <property type="evidence" value="ECO:0007669"/>
    <property type="project" value="Ensembl"/>
</dbReference>
<dbReference type="GO" id="GO:0007281">
    <property type="term" value="P:germ cell development"/>
    <property type="evidence" value="ECO:0007669"/>
    <property type="project" value="Ensembl"/>
</dbReference>
<dbReference type="GO" id="GO:0006879">
    <property type="term" value="P:intracellular iron ion homeostasis"/>
    <property type="evidence" value="ECO:0000314"/>
    <property type="project" value="UniProt"/>
</dbReference>
<dbReference type="GO" id="GO:0001880">
    <property type="term" value="P:Mullerian duct regression"/>
    <property type="evidence" value="ECO:0007669"/>
    <property type="project" value="Ensembl"/>
</dbReference>
<dbReference type="GO" id="GO:0043066">
    <property type="term" value="P:negative regulation of apoptotic process"/>
    <property type="evidence" value="ECO:0000315"/>
    <property type="project" value="BHF-UCL"/>
</dbReference>
<dbReference type="GO" id="GO:1902045">
    <property type="term" value="P:negative regulation of Fas signaling pathway"/>
    <property type="evidence" value="ECO:0000315"/>
    <property type="project" value="BHF-UCL"/>
</dbReference>
<dbReference type="GO" id="GO:0010629">
    <property type="term" value="P:negative regulation of gene expression"/>
    <property type="evidence" value="ECO:0000315"/>
    <property type="project" value="BHF-UCL"/>
</dbReference>
<dbReference type="GO" id="GO:0001649">
    <property type="term" value="P:osteoblast differentiation"/>
    <property type="evidence" value="ECO:0000314"/>
    <property type="project" value="BHF-UCL"/>
</dbReference>
<dbReference type="GO" id="GO:0002051">
    <property type="term" value="P:osteoblast fate commitment"/>
    <property type="evidence" value="ECO:0007669"/>
    <property type="project" value="Ensembl"/>
</dbReference>
<dbReference type="GO" id="GO:0045893">
    <property type="term" value="P:positive regulation of DNA-templated transcription"/>
    <property type="evidence" value="ECO:0000303"/>
    <property type="project" value="UniProtKB"/>
</dbReference>
<dbReference type="GO" id="GO:0045669">
    <property type="term" value="P:positive regulation of osteoblast differentiation"/>
    <property type="evidence" value="ECO:0000314"/>
    <property type="project" value="BHF-UCL"/>
</dbReference>
<dbReference type="GO" id="GO:0045944">
    <property type="term" value="P:positive regulation of transcription by RNA polymerase II"/>
    <property type="evidence" value="ECO:0000250"/>
    <property type="project" value="BHF-UCL"/>
</dbReference>
<dbReference type="GO" id="GO:0006357">
    <property type="term" value="P:regulation of transcription by RNA polymerase II"/>
    <property type="evidence" value="ECO:0000318"/>
    <property type="project" value="GO_Central"/>
</dbReference>
<dbReference type="GO" id="GO:0007165">
    <property type="term" value="P:signal transduction"/>
    <property type="evidence" value="ECO:0000303"/>
    <property type="project" value="UniProtKB"/>
</dbReference>
<dbReference type="GO" id="GO:0060395">
    <property type="term" value="P:SMAD protein signal transduction"/>
    <property type="evidence" value="ECO:0000250"/>
    <property type="project" value="BHF-UCL"/>
</dbReference>
<dbReference type="GO" id="GO:0048863">
    <property type="term" value="P:stem cell differentiation"/>
    <property type="evidence" value="ECO:0000250"/>
    <property type="project" value="UniProt"/>
</dbReference>
<dbReference type="GO" id="GO:0007179">
    <property type="term" value="P:transforming growth factor beta receptor signaling pathway"/>
    <property type="evidence" value="ECO:0000318"/>
    <property type="project" value="GO_Central"/>
</dbReference>
<dbReference type="GO" id="GO:0001657">
    <property type="term" value="P:ureteric bud development"/>
    <property type="evidence" value="ECO:0007669"/>
    <property type="project" value="Ensembl"/>
</dbReference>
<dbReference type="CDD" id="cd10490">
    <property type="entry name" value="MH1_SMAD_1_5_9"/>
    <property type="match status" value="1"/>
</dbReference>
<dbReference type="CDD" id="cd10497">
    <property type="entry name" value="MH2_SMAD_1_5_9"/>
    <property type="match status" value="1"/>
</dbReference>
<dbReference type="FunFam" id="2.60.200.10:FF:000001">
    <property type="entry name" value="Mothers against decapentaplegic homolog"/>
    <property type="match status" value="1"/>
</dbReference>
<dbReference type="FunFam" id="3.90.520.10:FF:000001">
    <property type="entry name" value="Mothers against decapentaplegic homolog"/>
    <property type="match status" value="1"/>
</dbReference>
<dbReference type="Gene3D" id="2.60.200.10">
    <property type="match status" value="1"/>
</dbReference>
<dbReference type="Gene3D" id="3.90.520.10">
    <property type="entry name" value="SMAD MH1 domain"/>
    <property type="match status" value="1"/>
</dbReference>
<dbReference type="InterPro" id="IPR013790">
    <property type="entry name" value="Dwarfin"/>
</dbReference>
<dbReference type="InterPro" id="IPR003619">
    <property type="entry name" value="MAD_homology1_Dwarfin-type"/>
</dbReference>
<dbReference type="InterPro" id="IPR013019">
    <property type="entry name" value="MAD_homology_MH1"/>
</dbReference>
<dbReference type="InterPro" id="IPR017855">
    <property type="entry name" value="SMAD-like_dom_sf"/>
</dbReference>
<dbReference type="InterPro" id="IPR001132">
    <property type="entry name" value="SMAD_dom_Dwarfin-type"/>
</dbReference>
<dbReference type="InterPro" id="IPR008984">
    <property type="entry name" value="SMAD_FHA_dom_sf"/>
</dbReference>
<dbReference type="InterPro" id="IPR036578">
    <property type="entry name" value="SMAD_MH1_sf"/>
</dbReference>
<dbReference type="PANTHER" id="PTHR13703:SF36">
    <property type="entry name" value="MOTHERS AGAINST DECAPENTAPLEGIC HOMOLOG 5"/>
    <property type="match status" value="1"/>
</dbReference>
<dbReference type="PANTHER" id="PTHR13703">
    <property type="entry name" value="SMAD"/>
    <property type="match status" value="1"/>
</dbReference>
<dbReference type="Pfam" id="PF03165">
    <property type="entry name" value="MH1"/>
    <property type="match status" value="1"/>
</dbReference>
<dbReference type="Pfam" id="PF03166">
    <property type="entry name" value="MH2"/>
    <property type="match status" value="1"/>
</dbReference>
<dbReference type="SMART" id="SM00523">
    <property type="entry name" value="DWA"/>
    <property type="match status" value="1"/>
</dbReference>
<dbReference type="SMART" id="SM00524">
    <property type="entry name" value="DWB"/>
    <property type="match status" value="1"/>
</dbReference>
<dbReference type="SUPFAM" id="SSF56366">
    <property type="entry name" value="SMAD MH1 domain"/>
    <property type="match status" value="1"/>
</dbReference>
<dbReference type="SUPFAM" id="SSF49879">
    <property type="entry name" value="SMAD/FHA domain"/>
    <property type="match status" value="1"/>
</dbReference>
<dbReference type="PROSITE" id="PS51075">
    <property type="entry name" value="MH1"/>
    <property type="match status" value="1"/>
</dbReference>
<dbReference type="PROSITE" id="PS51076">
    <property type="entry name" value="MH2"/>
    <property type="match status" value="1"/>
</dbReference>
<reference key="1">
    <citation type="journal article" date="1996" name="Nat. Genet.">
        <title>Mad-related genes in the human.</title>
        <authorList>
            <person name="Riggins G.J."/>
            <person name="Thiagalingam S."/>
            <person name="Rosenblum E."/>
            <person name="Weinstein C.L."/>
            <person name="Kern S.E."/>
            <person name="Hamilton S.R."/>
            <person name="Willson J.K.V."/>
            <person name="Markowitz S.D."/>
            <person name="Kinzler K.W."/>
            <person name="Vogelstein B.V."/>
        </authorList>
    </citation>
    <scope>NUCLEOTIDE SEQUENCE [MRNA]</scope>
</reference>
<reference key="2">
    <citation type="journal article" date="1997" name="Cancer Res.">
        <title>Localization of SMAD5 and its evaluation as a candidate myeloid tumor suppressor.</title>
        <authorList>
            <person name="Hejlik D.P."/>
            <person name="Kottickal L.V."/>
            <person name="Liang H."/>
            <person name="Fairman J."/>
            <person name="Davis T."/>
            <person name="Janecki T."/>
            <person name="Sexton D."/>
            <person name="Perry W. III"/>
            <person name="Tavtigian S.V."/>
            <person name="Teng D.H."/>
            <person name="Nagarajan L."/>
        </authorList>
    </citation>
    <scope>NUCLEOTIDE SEQUENCE [GENOMIC DNA / MRNA]</scope>
</reference>
<reference key="3">
    <citation type="journal article" date="1997" name="Leukemia">
        <title>Smad5, a tumor suppressor candidate at 5q31.1, is hemizygously lost and not mutated in the retained allele in human leukemia cell line HL60.</title>
        <authorList>
            <person name="Zavadil J."/>
            <person name="Brezinova J."/>
            <person name="Svoboda P."/>
            <person name="Zemanova Z."/>
            <person name="Michalova K."/>
        </authorList>
    </citation>
    <scope>NUCLEOTIDE SEQUENCE [MRNA]</scope>
</reference>
<reference key="4">
    <citation type="journal article" date="1998" name="Oncogene">
        <title>hSmad5 gene, a human hSmad family member: its full length cDNA, genomic structure, promoter region and mutation analysis in human tumors.</title>
        <authorList>
            <person name="Gemma A."/>
            <person name="Hagiwara K."/>
            <person name="Vincent F."/>
            <person name="Ke Y."/>
            <person name="Hancock A.R."/>
            <person name="Nagashima M."/>
            <person name="Bennett W.P."/>
            <person name="Harris C.C."/>
        </authorList>
    </citation>
    <scope>NUCLEOTIDE SEQUENCE [MRNA]</scope>
</reference>
<reference key="5">
    <citation type="journal article" date="1998" name="J. Biol. Chem.">
        <title>Smad5 and DPC4 are key molecules in mediating BMP-2-induced osteoblastic differentiation of the pluripotent mesenchymal precursor cell line C2C12.</title>
        <authorList>
            <person name="Nishimura R."/>
            <person name="Kato Y."/>
            <person name="Chen D."/>
            <person name="Harris S.E."/>
            <person name="Mundy G.R."/>
            <person name="Yoneda T."/>
        </authorList>
    </citation>
    <scope>NUCLEOTIDE SEQUENCE [MRNA]</scope>
    <scope>MUTAGENESIS OF GLY-419</scope>
    <scope>FUNCTION</scope>
    <scope>INTERACTION WITH SMAD4</scope>
    <scope>SUBCELLULAR LOCATION</scope>
</reference>
<reference key="6">
    <citation type="journal article" date="2004" name="Genome Res.">
        <title>The status, quality, and expansion of the NIH full-length cDNA project: the Mammalian Gene Collection (MGC).</title>
        <authorList>
            <consortium name="The MGC Project Team"/>
        </authorList>
    </citation>
    <scope>NUCLEOTIDE SEQUENCE [LARGE SCALE MRNA]</scope>
    <source>
        <tissue>Uterus</tissue>
    </source>
</reference>
<reference key="7">
    <citation type="submission" date="2009-10" db="UniProtKB">
        <authorList>
            <person name="Bienvenut W.V."/>
            <person name="Lempens A."/>
            <person name="Norman J.C."/>
        </authorList>
    </citation>
    <scope>PROTEIN SEQUENCE OF 2-16; 34-40; 130-158; 283-306 AND 309-319</scope>
    <scope>CLEAVAGE OF INITIATOR METHIONINE</scope>
    <scope>ACETYLATION AT THR-2</scope>
    <scope>IDENTIFICATION BY MASS SPECTROMETRY</scope>
    <source>
        <tissue>Ovarian carcinoma</tissue>
    </source>
</reference>
<reference key="8">
    <citation type="journal article" date="1998" name="Annu. Rev. Biochem.">
        <title>TGF-beta signal transduction.</title>
        <authorList>
            <person name="Massague J."/>
        </authorList>
    </citation>
    <scope>REVIEW</scope>
</reference>
<reference key="9">
    <citation type="journal article" date="1999" name="Cytokine Growth Factor Rev.">
        <title>Remarkable versatility of Smad proteins in the nucleus of transforming growth factor-beta activated cells.</title>
        <authorList>
            <person name="Verschueren K."/>
            <person name="Huylebroeck D."/>
        </authorList>
    </citation>
    <scope>REVIEW</scope>
</reference>
<reference key="10">
    <citation type="journal article" date="2000" name="Cytokine Growth Factor Rev.">
        <title>The Smad pathway.</title>
        <authorList>
            <person name="Wrana J.L."/>
            <person name="Attisano L."/>
        </authorList>
    </citation>
    <scope>REVIEW</scope>
</reference>
<reference key="11">
    <citation type="journal article" date="2000" name="Cytokine Growth Factor Rev.">
        <title>TGF-beta signaling by Smad proteins.</title>
        <authorList>
            <person name="Miyazono K."/>
        </authorList>
    </citation>
    <scope>REVIEW</scope>
</reference>
<reference key="12">
    <citation type="journal article" date="2002" name="Mol. Cell. Biol.">
        <title>Identification of mZnf8, a mouse Kruppel-like transcriptional repressor, as a novel nuclear interaction partner of Smad1.</title>
        <authorList>
            <person name="Jiao K."/>
            <person name="Zhou Y."/>
            <person name="Hogan B.L.M."/>
        </authorList>
    </citation>
    <scope>INTERACTION WITH ZNF8</scope>
</reference>
<reference key="13">
    <citation type="journal article" date="2002" name="Blood Cells Mol. Dis.">
        <title>Inhibition of Smad5 in human hematopoietic progenitors blocks erythroid differentiation induced by BMP4.</title>
        <authorList>
            <person name="Fuchs O."/>
            <person name="Simakova O."/>
            <person name="Klener P."/>
            <person name="Cmejlova J."/>
            <person name="Zivny J."/>
            <person name="Zavadil J."/>
            <person name="Stopka T."/>
        </authorList>
    </citation>
    <scope>FUNCTION</scope>
    <scope>PHOSPHORYLATION</scope>
</reference>
<reference key="14">
    <citation type="journal article" date="2003" name="Biochem. Biophys. Res. Commun.">
        <title>Mitochondrial localization of Smad5 in a human chondrogenic cell line.</title>
        <authorList>
            <person name="Juellig M."/>
            <person name="Stott N.S."/>
        </authorList>
    </citation>
    <scope>SUBCELLULAR LOCATION</scope>
</reference>
<reference key="15">
    <citation type="journal article" date="2004" name="Oncogene">
        <title>Suv39h histone methyltransferases interact with Smads and cooperate in BMP-induced repression.</title>
        <authorList>
            <person name="Frontelo P."/>
            <person name="Leader J.E."/>
            <person name="Yoo N."/>
            <person name="Potocki A.C."/>
            <person name="Crawford M."/>
            <person name="Kulik M."/>
            <person name="Lechleider R.J."/>
        </authorList>
    </citation>
    <scope>INTERACTION WITH SUV39H1 AND SUV39H2</scope>
</reference>
<reference key="16">
    <citation type="journal article" date="2005" name="J. Biol. Chem.">
        <title>The integral inner nuclear membrane protein MAN1 physically interacts with the R-Smad proteins to repress signaling by the transforming growth factor-{beta} superfamily of cytokines.</title>
        <authorList>
            <person name="Pan D."/>
            <person name="Estevez-Salmeron L.D."/>
            <person name="Stroschein S.L."/>
            <person name="Zhu X."/>
            <person name="He J."/>
            <person name="Zhou S."/>
            <person name="Luo K."/>
        </authorList>
    </citation>
    <scope>INTERACTION WITH LEMD3</scope>
</reference>
<reference key="17">
    <citation type="journal article" date="2006" name="Exp. Cell Res.">
        <title>Hgs physically interacts with Smad5 and attenuates BMP signaling.</title>
        <authorList>
            <person name="Haag J."/>
            <person name="Chubinskaya S."/>
            <person name="Aigner T."/>
        </authorList>
    </citation>
    <scope>FUNCTION</scope>
    <scope>INTERACTION WITH HGS</scope>
    <scope>SUBCELLULAR LOCATION</scope>
</reference>
<reference key="18">
    <citation type="journal article" date="2006" name="Cell">
        <title>Global, in vivo, and site-specific phosphorylation dynamics in signaling networks.</title>
        <authorList>
            <person name="Olsen J.V."/>
            <person name="Blagoev B."/>
            <person name="Gnad F."/>
            <person name="Macek B."/>
            <person name="Kumar C."/>
            <person name="Mortensen P."/>
            <person name="Mann M."/>
        </authorList>
    </citation>
    <scope>IDENTIFICATION BY MASS SPECTROMETRY [LARGE SCALE ANALYSIS]</scope>
    <source>
        <tissue>Cervix carcinoma</tissue>
    </source>
</reference>
<reference key="19">
    <citation type="journal article" date="2008" name="Proc. Natl. Acad. Sci. U.S.A.">
        <title>A quantitative atlas of mitotic phosphorylation.</title>
        <authorList>
            <person name="Dephoure N."/>
            <person name="Zhou C."/>
            <person name="Villen J."/>
            <person name="Beausoleil S.A."/>
            <person name="Bakalarski C.E."/>
            <person name="Elledge S.J."/>
            <person name="Gygi S.P."/>
        </authorList>
    </citation>
    <scope>IDENTIFICATION BY MASS SPECTROMETRY [LARGE SCALE ANALYSIS]</scope>
    <source>
        <tissue>Cervix carcinoma</tissue>
    </source>
</reference>
<reference key="20">
    <citation type="journal article" date="2009" name="Anal. Chem.">
        <title>Lys-N and trypsin cover complementary parts of the phosphoproteome in a refined SCX-based approach.</title>
        <authorList>
            <person name="Gauci S."/>
            <person name="Helbig A.O."/>
            <person name="Slijper M."/>
            <person name="Krijgsveld J."/>
            <person name="Heck A.J."/>
            <person name="Mohammed S."/>
        </authorList>
    </citation>
    <scope>IDENTIFICATION BY MASS SPECTROMETRY [LARGE SCALE ANALYSIS]</scope>
</reference>
<reference key="21">
    <citation type="journal article" date="2010" name="Sci. Signal.">
        <title>Quantitative phosphoproteomics reveals widespread full phosphorylation site occupancy during mitosis.</title>
        <authorList>
            <person name="Olsen J.V."/>
            <person name="Vermeulen M."/>
            <person name="Santamaria A."/>
            <person name="Kumar C."/>
            <person name="Miller M.L."/>
            <person name="Jensen L.J."/>
            <person name="Gnad F."/>
            <person name="Cox J."/>
            <person name="Jensen T.S."/>
            <person name="Nigg E.A."/>
            <person name="Brunak S."/>
            <person name="Mann M."/>
        </authorList>
    </citation>
    <scope>PHOSPHORYLATION [LARGE SCALE ANALYSIS] AT SER-463 AND SER-465</scope>
    <scope>IDENTIFICATION BY MASS SPECTROMETRY [LARGE SCALE ANALYSIS]</scope>
    <source>
        <tissue>Cervix carcinoma</tissue>
    </source>
</reference>
<reference key="22">
    <citation type="journal article" date="2011" name="BMC Syst. Biol.">
        <title>Initial characterization of the human central proteome.</title>
        <authorList>
            <person name="Burkard T.R."/>
            <person name="Planyavsky M."/>
            <person name="Kaupe I."/>
            <person name="Breitwieser F.P."/>
            <person name="Buerckstuemmer T."/>
            <person name="Bennett K.L."/>
            <person name="Superti-Furga G."/>
            <person name="Colinge J."/>
        </authorList>
    </citation>
    <scope>IDENTIFICATION BY MASS SPECTROMETRY [LARGE SCALE ANALYSIS]</scope>
</reference>
<reference key="23">
    <citation type="journal article" date="2012" name="Mol. Cell. Proteomics">
        <title>Comparative large-scale characterisation of plant vs. mammal proteins reveals similar and idiosyncratic N-alpha acetylation features.</title>
        <authorList>
            <person name="Bienvenut W.V."/>
            <person name="Sumpton D."/>
            <person name="Martinez A."/>
            <person name="Lilla S."/>
            <person name="Espagne C."/>
            <person name="Meinnel T."/>
            <person name="Giglione C."/>
        </authorList>
    </citation>
    <scope>ACETYLATION [LARGE SCALE ANALYSIS] AT THR-2</scope>
    <scope>CLEAVAGE OF INITIATOR METHIONINE [LARGE SCALE ANALYSIS]</scope>
    <scope>IDENTIFICATION BY MASS SPECTROMETRY [LARGE SCALE ANALYSIS]</scope>
</reference>
<reference key="24">
    <citation type="journal article" date="2012" name="Proc. Natl. Acad. Sci. U.S.A.">
        <title>N-terminal acetylome analyses and functional insights of the N-terminal acetyltransferase NatB.</title>
        <authorList>
            <person name="Van Damme P."/>
            <person name="Lasa M."/>
            <person name="Polevoda B."/>
            <person name="Gazquez C."/>
            <person name="Elosegui-Artola A."/>
            <person name="Kim D.S."/>
            <person name="De Juan-Pardo E."/>
            <person name="Demeyer K."/>
            <person name="Hole K."/>
            <person name="Larrea E."/>
            <person name="Timmerman E."/>
            <person name="Prieto J."/>
            <person name="Arnesen T."/>
            <person name="Sherman F."/>
            <person name="Gevaert K."/>
            <person name="Aldabe R."/>
        </authorList>
    </citation>
    <scope>IDENTIFICATION BY MASS SPECTROMETRY [LARGE SCALE ANALYSIS]</scope>
</reference>
<reference key="25">
    <citation type="journal article" date="2015" name="Mol. Cell. Biol.">
        <title>Nuclear export of Smads by RanBP3L regulates bone morphogenetic protein signaling and mesenchymal stem cell differentiation.</title>
        <authorList>
            <person name="Chen F."/>
            <person name="Lin X."/>
            <person name="Xu P."/>
            <person name="Zhang Z."/>
            <person name="Chen Y."/>
            <person name="Wang C."/>
            <person name="Han J."/>
            <person name="Zhao B."/>
            <person name="Xiao M."/>
            <person name="Feng X.H."/>
        </authorList>
    </citation>
    <scope>INTERACTION WITH RANBP3L</scope>
</reference>
<reference key="26">
    <citation type="journal article" date="2017" name="Cell Res.">
        <title>Smad5 acts as an intracellular pH messenger and maintains bioenergetic homeostasis.</title>
        <authorList>
            <person name="Fang Y."/>
            <person name="Liu Z."/>
            <person name="Chen Z."/>
            <person name="Xu X."/>
            <person name="Xiao M."/>
            <person name="Yu Y."/>
            <person name="Zhang Y."/>
            <person name="Zhang X."/>
            <person name="Du Y."/>
            <person name="Jiang C."/>
            <person name="Zhao Y."/>
            <person name="Wang Y."/>
            <person name="Fan B."/>
            <person name="Terheyden-Keighley D."/>
            <person name="Liu Y."/>
            <person name="Shi L."/>
            <person name="Hui Y."/>
            <person name="Zhang X."/>
            <person name="Zhang B."/>
            <person name="Feng H."/>
            <person name="Ma L."/>
            <person name="Zhang Q."/>
            <person name="Jin G."/>
            <person name="Yang Y."/>
            <person name="Xiang B."/>
            <person name="Liu L."/>
            <person name="Zhang X."/>
        </authorList>
    </citation>
    <scope>FUNCTION</scope>
    <scope>SUBCELLULAR LOCATION</scope>
    <scope>INTERACTION WITH HK1</scope>
</reference>
<reference evidence="17 18" key="27">
    <citation type="journal article" date="2021" name="Comput. Struct. Biotechnol. J.">
        <title>Unveiling the dimer/monomer propensities of Smad MH1-DNA complexes.</title>
        <authorList>
            <person name="Ruiz L."/>
            <person name="Kaczmarska Z."/>
            <person name="Gomes T."/>
            <person name="Aragon E."/>
            <person name="Torner C."/>
            <person name="Freier R."/>
            <person name="Baginski B."/>
            <person name="Martin-Malpartida P."/>
            <person name="de Martin Garrido N."/>
            <person name="Marquez J.A."/>
            <person name="Cordeiro T.N."/>
            <person name="Pluta R."/>
            <person name="Macias M.J."/>
        </authorList>
    </citation>
    <scope>X-RAY CRYSTALLOGRAPHY (2.31 ANGSTROMS) OF 9-138</scope>
    <scope>SUBUNIT</scope>
    <scope>FUNCTION</scope>
</reference>
<name>SMAD5_HUMAN</name>
<organism>
    <name type="scientific">Homo sapiens</name>
    <name type="common">Human</name>
    <dbReference type="NCBI Taxonomy" id="9606"/>
    <lineage>
        <taxon>Eukaryota</taxon>
        <taxon>Metazoa</taxon>
        <taxon>Chordata</taxon>
        <taxon>Craniata</taxon>
        <taxon>Vertebrata</taxon>
        <taxon>Euteleostomi</taxon>
        <taxon>Mammalia</taxon>
        <taxon>Eutheria</taxon>
        <taxon>Euarchontoglires</taxon>
        <taxon>Primates</taxon>
        <taxon>Haplorrhini</taxon>
        <taxon>Catarrhini</taxon>
        <taxon>Hominidae</taxon>
        <taxon>Homo</taxon>
    </lineage>
</organism>
<sequence>MTSMASLFSFTSPAVKRLLGWKQGDEEEKWAEKAVDALVKKLKKKKGAMEELEKALSSPGQPSKCVTIPRSLDGRLQVSHRKGLPHVIYCRVWRWPDLQSHHELKPLDICEFPFGSKQKEVCINPYHYKRVESPVLPPVLVPRHNEFNPQHSLLVQFRNLSHNEPHMPQNATFPDSFHQPNNTPFPLSPNSPYPPSPASSTYPNSPASSGPGSPFQLPADTPPPAYMPPDDQMGQDNSQPMDTSNNMIPQIMPSISSRDVQPVAYEEPKHWCSIVYYELNNRVGEAFHASSTSVLVDGFTDPSNNKSRFCLGLLSNVNRNSTIENTRRHIGKGVHLYYVGGEVYAECLSDSSIFVQSRNCNFHHGFHPTTVCKIPSSCSLKIFNNQEFAQLLAQSVNHGFEAVYELTKMCTIRMSFVKGWGAEYHRQDVTSTPCWIEIHLHGPLQWLDKVLTQMGSPLNPISSVS</sequence>
<accession>Q99717</accession>
<accession>O14688</accession>
<accession>Q15798</accession>
<accession>Q9UQA1</accession>
<keyword id="KW-0002">3D-structure</keyword>
<keyword id="KW-0007">Acetylation</keyword>
<keyword id="KW-0963">Cytoplasm</keyword>
<keyword id="KW-0903">Direct protein sequencing</keyword>
<keyword id="KW-0238">DNA-binding</keyword>
<keyword id="KW-0479">Metal-binding</keyword>
<keyword id="KW-0496">Mitochondrion</keyword>
<keyword id="KW-0539">Nucleus</keyword>
<keyword id="KW-0597">Phosphoprotein</keyword>
<keyword id="KW-1267">Proteomics identification</keyword>
<keyword id="KW-1185">Reference proteome</keyword>
<keyword id="KW-0804">Transcription</keyword>
<keyword id="KW-0805">Transcription regulation</keyword>
<keyword id="KW-0862">Zinc</keyword>
<proteinExistence type="evidence at protein level"/>
<feature type="initiator methionine" description="Removed" evidence="15 20">
    <location>
        <position position="1"/>
    </location>
</feature>
<feature type="chain" id="PRO_0000090865" description="Mothers against decapentaplegic homolog 5">
    <location>
        <begin position="2"/>
        <end position="465"/>
    </location>
</feature>
<feature type="domain" description="MH1" evidence="2">
    <location>
        <begin position="13"/>
        <end position="137"/>
    </location>
</feature>
<feature type="domain" description="MH2" evidence="3">
    <location>
        <begin position="271"/>
        <end position="465"/>
    </location>
</feature>
<feature type="region of interest" description="Disordered" evidence="4">
    <location>
        <begin position="163"/>
        <end position="249"/>
    </location>
</feature>
<feature type="compositionally biased region" description="Polar residues" evidence="4">
    <location>
        <begin position="169"/>
        <end position="182"/>
    </location>
</feature>
<feature type="compositionally biased region" description="Pro residues" evidence="4">
    <location>
        <begin position="186"/>
        <end position="197"/>
    </location>
</feature>
<feature type="compositionally biased region" description="Low complexity" evidence="4">
    <location>
        <begin position="198"/>
        <end position="214"/>
    </location>
</feature>
<feature type="compositionally biased region" description="Polar residues" evidence="4">
    <location>
        <begin position="234"/>
        <end position="249"/>
    </location>
</feature>
<feature type="binding site" evidence="1">
    <location>
        <position position="65"/>
    </location>
    <ligand>
        <name>Zn(2+)</name>
        <dbReference type="ChEBI" id="CHEBI:29105"/>
    </ligand>
</feature>
<feature type="binding site" evidence="1">
    <location>
        <position position="110"/>
    </location>
    <ligand>
        <name>Zn(2+)</name>
        <dbReference type="ChEBI" id="CHEBI:29105"/>
    </ligand>
</feature>
<feature type="binding site" evidence="1">
    <location>
        <position position="122"/>
    </location>
    <ligand>
        <name>Zn(2+)</name>
        <dbReference type="ChEBI" id="CHEBI:29105"/>
    </ligand>
</feature>
<feature type="binding site" evidence="1">
    <location>
        <position position="127"/>
    </location>
    <ligand>
        <name>Zn(2+)</name>
        <dbReference type="ChEBI" id="CHEBI:29105"/>
    </ligand>
</feature>
<feature type="modified residue" description="N-acetylthreonine" evidence="15 20">
    <location>
        <position position="2"/>
    </location>
</feature>
<feature type="modified residue" description="Phosphoserine" evidence="19">
    <location>
        <position position="463"/>
    </location>
</feature>
<feature type="modified residue" description="Phosphoserine" evidence="19">
    <location>
        <position position="465"/>
    </location>
</feature>
<feature type="mutagenesis site" description="Loss of phosphorylation and interaction with SMAD4." evidence="14">
    <original>G</original>
    <variation>S</variation>
    <location>
        <position position="419"/>
    </location>
</feature>
<feature type="sequence conflict" description="In Ref. 1; AAC50791." evidence="16" ref="1">
    <original>D</original>
    <variation>H</variation>
    <location>
        <position position="175"/>
    </location>
</feature>
<feature type="sequence conflict" description="In Ref. 1; AAC50791." evidence="16" ref="1">
    <original>N</original>
    <variation>P</variation>
    <location>
        <position position="237"/>
    </location>
</feature>
<feature type="sequence conflict" description="In Ref. 1; AAC50791." evidence="16" ref="1">
    <original>S</original>
    <variation>R</variation>
    <location>
        <position position="293"/>
    </location>
</feature>
<feature type="helix" evidence="21">
    <location>
        <begin position="13"/>
        <end position="20"/>
    </location>
</feature>
<feature type="helix" evidence="21">
    <location>
        <begin position="26"/>
        <end position="42"/>
    </location>
</feature>
<feature type="helix" evidence="21">
    <location>
        <begin position="48"/>
        <end position="57"/>
    </location>
</feature>
<feature type="strand" evidence="21">
    <location>
        <begin position="67"/>
        <end position="69"/>
    </location>
</feature>
<feature type="strand" evidence="21">
    <location>
        <begin position="72"/>
        <end position="74"/>
    </location>
</feature>
<feature type="strand" evidence="21">
    <location>
        <begin position="76"/>
        <end position="78"/>
    </location>
</feature>
<feature type="strand" evidence="21">
    <location>
        <begin position="81"/>
        <end position="83"/>
    </location>
</feature>
<feature type="helix" evidence="21">
    <location>
        <begin position="85"/>
        <end position="93"/>
    </location>
</feature>
<feature type="helix" evidence="21">
    <location>
        <begin position="101"/>
        <end position="103"/>
    </location>
</feature>
<feature type="strand" evidence="21">
    <location>
        <begin position="104"/>
        <end position="106"/>
    </location>
</feature>
<feature type="helix" evidence="21">
    <location>
        <begin position="114"/>
        <end position="116"/>
    </location>
</feature>
<feature type="strand" evidence="21">
    <location>
        <begin position="119"/>
        <end position="122"/>
    </location>
</feature>
<feature type="helix" evidence="21">
    <location>
        <begin position="125"/>
        <end position="127"/>
    </location>
</feature>
<feature type="strand" evidence="21">
    <location>
        <begin position="128"/>
        <end position="130"/>
    </location>
</feature>
<gene>
    <name type="primary">SMAD5</name>
    <name type="synonym">MADH5</name>
</gene>
<protein>
    <recommendedName>
        <fullName>Mothers against decapentaplegic homolog 5</fullName>
        <shortName>MAD homolog 5</shortName>
        <shortName>Mothers against DPP homolog 5</shortName>
    </recommendedName>
    <alternativeName>
        <fullName>JV5-1</fullName>
    </alternativeName>
    <alternativeName>
        <fullName>SMAD family member 5</fullName>
        <shortName>SMAD 5</shortName>
        <shortName>Smad5</shortName>
        <shortName>hSmad5</shortName>
    </alternativeName>
</protein>
<evidence type="ECO:0000250" key="1">
    <source>
        <dbReference type="UniProtKB" id="P97454"/>
    </source>
</evidence>
<evidence type="ECO:0000255" key="2">
    <source>
        <dbReference type="PROSITE-ProRule" id="PRU00438"/>
    </source>
</evidence>
<evidence type="ECO:0000255" key="3">
    <source>
        <dbReference type="PROSITE-ProRule" id="PRU00439"/>
    </source>
</evidence>
<evidence type="ECO:0000256" key="4">
    <source>
        <dbReference type="SAM" id="MobiDB-lite"/>
    </source>
</evidence>
<evidence type="ECO:0000269" key="5">
    <source>
    </source>
</evidence>
<evidence type="ECO:0000269" key="6">
    <source>
    </source>
</evidence>
<evidence type="ECO:0000269" key="7">
    <source>
    </source>
</evidence>
<evidence type="ECO:0000269" key="8">
    <source>
    </source>
</evidence>
<evidence type="ECO:0000269" key="9">
    <source>
    </source>
</evidence>
<evidence type="ECO:0000269" key="10">
    <source>
    </source>
</evidence>
<evidence type="ECO:0000269" key="11">
    <source>
    </source>
</evidence>
<evidence type="ECO:0000269" key="12">
    <source>
    </source>
</evidence>
<evidence type="ECO:0000269" key="13">
    <source>
    </source>
</evidence>
<evidence type="ECO:0000269" key="14">
    <source>
    </source>
</evidence>
<evidence type="ECO:0000269" key="15">
    <source ref="7"/>
</evidence>
<evidence type="ECO:0000305" key="16"/>
<evidence type="ECO:0007744" key="17">
    <source>
        <dbReference type="PDB" id="6FZS"/>
    </source>
</evidence>
<evidence type="ECO:0007744" key="18">
    <source>
        <dbReference type="PDB" id="6TCE"/>
    </source>
</evidence>
<evidence type="ECO:0007744" key="19">
    <source>
    </source>
</evidence>
<evidence type="ECO:0007744" key="20">
    <source>
    </source>
</evidence>
<evidence type="ECO:0007829" key="21">
    <source>
        <dbReference type="PDB" id="6FZS"/>
    </source>
</evidence>